<keyword id="KW-0067">ATP-binding</keyword>
<keyword id="KW-0963">Cytoplasm</keyword>
<keyword id="KW-0238">DNA-binding</keyword>
<keyword id="KW-0413">Isomerase</keyword>
<keyword id="KW-0460">Magnesium</keyword>
<keyword id="KW-0479">Metal-binding</keyword>
<keyword id="KW-0547">Nucleotide-binding</keyword>
<keyword id="KW-0799">Topoisomerase</keyword>
<dbReference type="EC" id="5.6.2.2" evidence="1"/>
<dbReference type="EMBL" id="AE014074">
    <property type="protein sequence ID" value="AAM79083.1"/>
    <property type="status" value="ALT_INIT"/>
    <property type="molecule type" value="Genomic_DNA"/>
</dbReference>
<dbReference type="RefSeq" id="WP_011054323.1">
    <property type="nucleotide sequence ID" value="NC_004070.1"/>
</dbReference>
<dbReference type="SMR" id="P0DG04"/>
<dbReference type="ChEMBL" id="CHEMBL3991502"/>
<dbReference type="KEGG" id="spg:SpyM3_0476"/>
<dbReference type="HOGENOM" id="CLU_006146_4_1_9"/>
<dbReference type="Proteomes" id="UP000000564">
    <property type="component" value="Chromosome"/>
</dbReference>
<dbReference type="GO" id="GO:0005694">
    <property type="term" value="C:chromosome"/>
    <property type="evidence" value="ECO:0007669"/>
    <property type="project" value="InterPro"/>
</dbReference>
<dbReference type="GO" id="GO:0005737">
    <property type="term" value="C:cytoplasm"/>
    <property type="evidence" value="ECO:0007669"/>
    <property type="project" value="UniProtKB-SubCell"/>
</dbReference>
<dbReference type="GO" id="GO:0005524">
    <property type="term" value="F:ATP binding"/>
    <property type="evidence" value="ECO:0007669"/>
    <property type="project" value="UniProtKB-UniRule"/>
</dbReference>
<dbReference type="GO" id="GO:0003677">
    <property type="term" value="F:DNA binding"/>
    <property type="evidence" value="ECO:0007669"/>
    <property type="project" value="UniProtKB-KW"/>
</dbReference>
<dbReference type="GO" id="GO:0034335">
    <property type="term" value="F:DNA negative supercoiling activity"/>
    <property type="evidence" value="ECO:0007669"/>
    <property type="project" value="UniProtKB-ARBA"/>
</dbReference>
<dbReference type="GO" id="GO:0046872">
    <property type="term" value="F:metal ion binding"/>
    <property type="evidence" value="ECO:0007669"/>
    <property type="project" value="UniProtKB-KW"/>
</dbReference>
<dbReference type="GO" id="GO:0006265">
    <property type="term" value="P:DNA topological change"/>
    <property type="evidence" value="ECO:0007669"/>
    <property type="project" value="UniProtKB-UniRule"/>
</dbReference>
<dbReference type="GO" id="GO:0006261">
    <property type="term" value="P:DNA-templated DNA replication"/>
    <property type="evidence" value="ECO:0007669"/>
    <property type="project" value="UniProtKB-UniRule"/>
</dbReference>
<dbReference type="CDD" id="cd16928">
    <property type="entry name" value="HATPase_GyrB-like"/>
    <property type="match status" value="1"/>
</dbReference>
<dbReference type="CDD" id="cd00822">
    <property type="entry name" value="TopoII_Trans_DNA_gyrase"/>
    <property type="match status" value="1"/>
</dbReference>
<dbReference type="CDD" id="cd03366">
    <property type="entry name" value="TOPRIM_TopoIIA_GyrB"/>
    <property type="match status" value="1"/>
</dbReference>
<dbReference type="FunFam" id="3.30.230.10:FF:000005">
    <property type="entry name" value="DNA gyrase subunit B"/>
    <property type="match status" value="1"/>
</dbReference>
<dbReference type="FunFam" id="3.30.565.10:FF:000002">
    <property type="entry name" value="DNA gyrase subunit B"/>
    <property type="match status" value="1"/>
</dbReference>
<dbReference type="FunFam" id="3.40.50.670:FF:000002">
    <property type="entry name" value="DNA gyrase subunit B"/>
    <property type="match status" value="1"/>
</dbReference>
<dbReference type="Gene3D" id="3.30.230.10">
    <property type="match status" value="1"/>
</dbReference>
<dbReference type="Gene3D" id="3.40.50.670">
    <property type="match status" value="1"/>
</dbReference>
<dbReference type="Gene3D" id="3.30.565.10">
    <property type="entry name" value="Histidine kinase-like ATPase, C-terminal domain"/>
    <property type="match status" value="1"/>
</dbReference>
<dbReference type="HAMAP" id="MF_01898">
    <property type="entry name" value="GyrB"/>
    <property type="match status" value="1"/>
</dbReference>
<dbReference type="InterPro" id="IPR002288">
    <property type="entry name" value="DNA_gyrase_B_C"/>
</dbReference>
<dbReference type="InterPro" id="IPR011557">
    <property type="entry name" value="GyrB"/>
</dbReference>
<dbReference type="InterPro" id="IPR036890">
    <property type="entry name" value="HATPase_C_sf"/>
</dbReference>
<dbReference type="InterPro" id="IPR020568">
    <property type="entry name" value="Ribosomal_Su5_D2-typ_SF"/>
</dbReference>
<dbReference type="InterPro" id="IPR014721">
    <property type="entry name" value="Ribsml_uS5_D2-typ_fold_subgr"/>
</dbReference>
<dbReference type="InterPro" id="IPR001241">
    <property type="entry name" value="Topo_IIA"/>
</dbReference>
<dbReference type="InterPro" id="IPR013760">
    <property type="entry name" value="Topo_IIA-like_dom_sf"/>
</dbReference>
<dbReference type="InterPro" id="IPR000565">
    <property type="entry name" value="Topo_IIA_B"/>
</dbReference>
<dbReference type="InterPro" id="IPR013759">
    <property type="entry name" value="Topo_IIA_B_C"/>
</dbReference>
<dbReference type="InterPro" id="IPR013506">
    <property type="entry name" value="Topo_IIA_bsu_dom2"/>
</dbReference>
<dbReference type="InterPro" id="IPR018522">
    <property type="entry name" value="TopoIIA_CS"/>
</dbReference>
<dbReference type="InterPro" id="IPR006171">
    <property type="entry name" value="TOPRIM_dom"/>
</dbReference>
<dbReference type="InterPro" id="IPR034160">
    <property type="entry name" value="TOPRIM_GyrB"/>
</dbReference>
<dbReference type="NCBIfam" id="TIGR01059">
    <property type="entry name" value="gyrB"/>
    <property type="match status" value="1"/>
</dbReference>
<dbReference type="NCBIfam" id="NF004189">
    <property type="entry name" value="PRK05644.1"/>
    <property type="match status" value="1"/>
</dbReference>
<dbReference type="NCBIfam" id="NF011501">
    <property type="entry name" value="PRK14939.1"/>
    <property type="match status" value="1"/>
</dbReference>
<dbReference type="PANTHER" id="PTHR45866:SF1">
    <property type="entry name" value="DNA GYRASE SUBUNIT B, MITOCHONDRIAL"/>
    <property type="match status" value="1"/>
</dbReference>
<dbReference type="PANTHER" id="PTHR45866">
    <property type="entry name" value="DNA GYRASE/TOPOISOMERASE SUBUNIT B"/>
    <property type="match status" value="1"/>
</dbReference>
<dbReference type="Pfam" id="PF00204">
    <property type="entry name" value="DNA_gyraseB"/>
    <property type="match status" value="1"/>
</dbReference>
<dbReference type="Pfam" id="PF00986">
    <property type="entry name" value="DNA_gyraseB_C"/>
    <property type="match status" value="1"/>
</dbReference>
<dbReference type="Pfam" id="PF02518">
    <property type="entry name" value="HATPase_c"/>
    <property type="match status" value="1"/>
</dbReference>
<dbReference type="Pfam" id="PF01751">
    <property type="entry name" value="Toprim"/>
    <property type="match status" value="1"/>
</dbReference>
<dbReference type="PRINTS" id="PR01159">
    <property type="entry name" value="DNAGYRASEB"/>
</dbReference>
<dbReference type="PRINTS" id="PR00418">
    <property type="entry name" value="TPI2FAMILY"/>
</dbReference>
<dbReference type="SMART" id="SM00387">
    <property type="entry name" value="HATPase_c"/>
    <property type="match status" value="1"/>
</dbReference>
<dbReference type="SMART" id="SM00433">
    <property type="entry name" value="TOP2c"/>
    <property type="match status" value="1"/>
</dbReference>
<dbReference type="SUPFAM" id="SSF55874">
    <property type="entry name" value="ATPase domain of HSP90 chaperone/DNA topoisomerase II/histidine kinase"/>
    <property type="match status" value="1"/>
</dbReference>
<dbReference type="SUPFAM" id="SSF54211">
    <property type="entry name" value="Ribosomal protein S5 domain 2-like"/>
    <property type="match status" value="1"/>
</dbReference>
<dbReference type="SUPFAM" id="SSF56719">
    <property type="entry name" value="Type II DNA topoisomerase"/>
    <property type="match status" value="1"/>
</dbReference>
<dbReference type="PROSITE" id="PS00177">
    <property type="entry name" value="TOPOISOMERASE_II"/>
    <property type="match status" value="1"/>
</dbReference>
<dbReference type="PROSITE" id="PS50880">
    <property type="entry name" value="TOPRIM"/>
    <property type="match status" value="1"/>
</dbReference>
<evidence type="ECO:0000255" key="1">
    <source>
        <dbReference type="HAMAP-Rule" id="MF_01898"/>
    </source>
</evidence>
<evidence type="ECO:0000305" key="2"/>
<accession>P0DG04</accession>
<accession>Q878H1</accession>
<accession>Q8K840</accession>
<feature type="chain" id="PRO_0000145350" description="DNA gyrase subunit B">
    <location>
        <begin position="1"/>
        <end position="650"/>
    </location>
</feature>
<feature type="domain" description="Toprim" evidence="1">
    <location>
        <begin position="429"/>
        <end position="543"/>
    </location>
</feature>
<feature type="binding site" evidence="1">
    <location>
        <position position="435"/>
    </location>
    <ligand>
        <name>Mg(2+)</name>
        <dbReference type="ChEBI" id="CHEBI:18420"/>
        <label>1</label>
        <note>catalytic</note>
    </ligand>
</feature>
<feature type="binding site" evidence="1">
    <location>
        <position position="508"/>
    </location>
    <ligand>
        <name>Mg(2+)</name>
        <dbReference type="ChEBI" id="CHEBI:18420"/>
        <label>1</label>
        <note>catalytic</note>
    </ligand>
</feature>
<feature type="binding site" evidence="1">
    <location>
        <position position="508"/>
    </location>
    <ligand>
        <name>Mg(2+)</name>
        <dbReference type="ChEBI" id="CHEBI:18420"/>
        <label>2</label>
    </ligand>
</feature>
<feature type="binding site" evidence="1">
    <location>
        <position position="510"/>
    </location>
    <ligand>
        <name>Mg(2+)</name>
        <dbReference type="ChEBI" id="CHEBI:18420"/>
        <label>2</label>
    </ligand>
</feature>
<feature type="site" description="Interaction with DNA" evidence="1">
    <location>
        <position position="460"/>
    </location>
</feature>
<feature type="site" description="Interaction with DNA" evidence="1">
    <location>
        <position position="463"/>
    </location>
</feature>
<comment type="function">
    <text evidence="1">A type II topoisomerase that negatively supercoils closed circular double-stranded (ds) DNA in an ATP-dependent manner to modulate DNA topology and maintain chromosomes in an underwound state. Negative supercoiling favors strand separation, and DNA replication, transcription, recombination and repair, all of which involve strand separation. Also able to catalyze the interconversion of other topological isomers of dsDNA rings, including catenanes and knotted rings. Type II topoisomerases break and join 2 DNA strands simultaneously in an ATP-dependent manner.</text>
</comment>
<comment type="catalytic activity">
    <reaction evidence="1">
        <text>ATP-dependent breakage, passage and rejoining of double-stranded DNA.</text>
        <dbReference type="EC" id="5.6.2.2"/>
    </reaction>
</comment>
<comment type="cofactor">
    <cofactor evidence="1">
        <name>Mg(2+)</name>
        <dbReference type="ChEBI" id="CHEBI:18420"/>
    </cofactor>
    <cofactor evidence="1">
        <name>Mn(2+)</name>
        <dbReference type="ChEBI" id="CHEBI:29035"/>
    </cofactor>
    <cofactor evidence="1">
        <name>Ca(2+)</name>
        <dbReference type="ChEBI" id="CHEBI:29108"/>
    </cofactor>
    <text evidence="1">Binds two Mg(2+) per subunit. The magnesium ions form salt bridges with both the protein and the DNA. Can also accept other divalent metal cations, such as Mn(2+) or Ca(2+).</text>
</comment>
<comment type="subunit">
    <text evidence="1">Heterotetramer, composed of two GyrA and two GyrB chains. In the heterotetramer, GyrA contains the active site tyrosine that forms a transient covalent intermediate with DNA, while GyrB binds cofactors and catalyzes ATP hydrolysis.</text>
</comment>
<comment type="subcellular location">
    <subcellularLocation>
        <location evidence="1">Cytoplasm</location>
    </subcellularLocation>
</comment>
<comment type="miscellaneous">
    <text evidence="1">Few gyrases are as efficient as E.coli at forming negative supercoils. Not all organisms have 2 type II topoisomerases; in organisms with a single type II topoisomerase this enzyme also has to decatenate newly replicated chromosomes.</text>
</comment>
<comment type="similarity">
    <text evidence="1">Belongs to the type II topoisomerase GyrB family.</text>
</comment>
<comment type="sequence caution" evidence="2">
    <conflict type="erroneous initiation">
        <sequence resource="EMBL-CDS" id="AAM79083"/>
    </conflict>
    <text>Truncated N-terminus.</text>
</comment>
<gene>
    <name evidence="1" type="primary">gyrB</name>
    <name type="ordered locus">SpyM3_0476</name>
</gene>
<reference key="1">
    <citation type="journal article" date="2002" name="Proc. Natl. Acad. Sci. U.S.A.">
        <title>Genome sequence of a serotype M3 strain of group A Streptococcus: phage-encoded toxins, the high-virulence phenotype, and clone emergence.</title>
        <authorList>
            <person name="Beres S.B."/>
            <person name="Sylva G.L."/>
            <person name="Barbian K.D."/>
            <person name="Lei B."/>
            <person name="Hoff J.S."/>
            <person name="Mammarella N.D."/>
            <person name="Liu M.-Y."/>
            <person name="Smoot J.C."/>
            <person name="Porcella S.F."/>
            <person name="Parkins L.D."/>
            <person name="Campbell D.S."/>
            <person name="Smith T.M."/>
            <person name="McCormick J.K."/>
            <person name="Leung D.Y.M."/>
            <person name="Schlievert P.M."/>
            <person name="Musser J.M."/>
        </authorList>
    </citation>
    <scope>NUCLEOTIDE SEQUENCE [LARGE SCALE GENOMIC DNA]</scope>
    <source>
        <strain>ATCC BAA-595 / MGAS315</strain>
    </source>
</reference>
<name>GYRB_STRP3</name>
<organism>
    <name type="scientific">Streptococcus pyogenes serotype M3 (strain ATCC BAA-595 / MGAS315)</name>
    <dbReference type="NCBI Taxonomy" id="198466"/>
    <lineage>
        <taxon>Bacteria</taxon>
        <taxon>Bacillati</taxon>
        <taxon>Bacillota</taxon>
        <taxon>Bacilli</taxon>
        <taxon>Lactobacillales</taxon>
        <taxon>Streptococcaceae</taxon>
        <taxon>Streptococcus</taxon>
    </lineage>
</organism>
<proteinExistence type="inferred from homology"/>
<protein>
    <recommendedName>
        <fullName evidence="1">DNA gyrase subunit B</fullName>
        <ecNumber evidence="1">5.6.2.2</ecNumber>
    </recommendedName>
</protein>
<sequence>MIEENKHFEKKMQEYDASQIQVLEGLEAVRMRPGMYIGSTAKEGLHHLVWEIVDNSIDEALAGFASHIKVFIEADNSITVVDDGRGIPVDIQVKTGRPAVETVFTVLHAGGKFGGGSYKVSGGLHGVGSSVVNALSTQLDVRVYKNGQIHYQEFKRGAVVADLEVIGTTDVTGTTVHFTPDPEIFTETTQFDYSVLAKRIQELAFLNRGLKISITDKRSGMEQEEHFHYEGGIGSYVEFLNDKKDVIFETPIYTDGELEGIAVEVAMQYTTSYQETVMSFANNIHTHEGGTHEQGFRAALTRVINDYAKKNKILKENEDNLTGEDVREGLTAVISVKHPNPQFEGQTKTKLGNSEVVKITNRLFSEAFQRFLLENPQVARKIVEKGILASKARIAAKRAREVTRKKSGLEISNLPGKLADCSSNDANQNELFIVEGDSAGGSAKSGRNREFQAILPIRGKILNVEKATMDKILANEEIRSLFTAMGTGFGADFDVSKARYQKLVIMTDADVDGAHIRTLLLTLIYRFMRPVLEAGYVYIAQPPIYGVKVGSEIKEYIQPGIDQEDQLKTALEKYSIGRSKPTVQRYKGLGEMDDHQLWETTMDPENRLMARVTVDDAAEADKVFDMLMGDRVEPRRDFIEENAVYSTLDI</sequence>